<gene>
    <name evidence="1" type="primary">thiM</name>
    <name type="ordered locus">PBPRA2337</name>
</gene>
<sequence>MKKCDLDYTQSICDALNTLRQQKPLVVNITNYVVMNNTANALLAIGASPIMAHSQEEMAEMMSFAGSLVINIGTLDSVWIPRMIYAVEQANANNKPVILDPVGCGASALRTNTARQIVALAEQLTIRGNASEIIALAGEQAQSKGVDALDSSDKAIHAAHHLATQNNCSVVISGATDYIVTTTATIALNNGHEMMPYVTGMGCSHTALTGAFAAIGEPTGLAATAVLGIAGEIAARDAAGPGSLQVNLLDTLYHLDEAVLREYIRINLVEEGCH</sequence>
<name>THIM_PHOPR</name>
<feature type="chain" id="PRO_0000336563" description="Hydroxyethylthiazole kinase">
    <location>
        <begin position="1"/>
        <end position="274"/>
    </location>
</feature>
<feature type="binding site" evidence="1">
    <location>
        <position position="51"/>
    </location>
    <ligand>
        <name>substrate</name>
    </ligand>
</feature>
<feature type="binding site" evidence="1">
    <location>
        <position position="127"/>
    </location>
    <ligand>
        <name>ATP</name>
        <dbReference type="ChEBI" id="CHEBI:30616"/>
    </ligand>
</feature>
<feature type="binding site" evidence="1">
    <location>
        <position position="173"/>
    </location>
    <ligand>
        <name>ATP</name>
        <dbReference type="ChEBI" id="CHEBI:30616"/>
    </ligand>
</feature>
<feature type="binding site" evidence="1">
    <location>
        <position position="200"/>
    </location>
    <ligand>
        <name>substrate</name>
    </ligand>
</feature>
<protein>
    <recommendedName>
        <fullName evidence="1">Hydroxyethylthiazole kinase</fullName>
        <ecNumber evidence="1">2.7.1.50</ecNumber>
    </recommendedName>
    <alternativeName>
        <fullName evidence="1">4-methyl-5-beta-hydroxyethylthiazole kinase</fullName>
        <shortName evidence="1">TH kinase</shortName>
        <shortName evidence="1">Thz kinase</shortName>
    </alternativeName>
</protein>
<comment type="function">
    <text evidence="1">Catalyzes the phosphorylation of the hydroxyl group of 4-methyl-5-beta-hydroxyethylthiazole (THZ).</text>
</comment>
<comment type="catalytic activity">
    <reaction evidence="1">
        <text>5-(2-hydroxyethyl)-4-methylthiazole + ATP = 4-methyl-5-(2-phosphooxyethyl)-thiazole + ADP + H(+)</text>
        <dbReference type="Rhea" id="RHEA:24212"/>
        <dbReference type="ChEBI" id="CHEBI:15378"/>
        <dbReference type="ChEBI" id="CHEBI:17957"/>
        <dbReference type="ChEBI" id="CHEBI:30616"/>
        <dbReference type="ChEBI" id="CHEBI:58296"/>
        <dbReference type="ChEBI" id="CHEBI:456216"/>
        <dbReference type="EC" id="2.7.1.50"/>
    </reaction>
</comment>
<comment type="cofactor">
    <cofactor evidence="1">
        <name>Mg(2+)</name>
        <dbReference type="ChEBI" id="CHEBI:18420"/>
    </cofactor>
</comment>
<comment type="pathway">
    <text evidence="1">Cofactor biosynthesis; thiamine diphosphate biosynthesis; 4-methyl-5-(2-phosphoethyl)-thiazole from 5-(2-hydroxyethyl)-4-methylthiazole: step 1/1.</text>
</comment>
<comment type="similarity">
    <text evidence="1">Belongs to the Thz kinase family.</text>
</comment>
<evidence type="ECO:0000255" key="1">
    <source>
        <dbReference type="HAMAP-Rule" id="MF_00228"/>
    </source>
</evidence>
<proteinExistence type="inferred from homology"/>
<dbReference type="EC" id="2.7.1.50" evidence="1"/>
<dbReference type="EMBL" id="CR378670">
    <property type="protein sequence ID" value="CAG20722.1"/>
    <property type="molecule type" value="Genomic_DNA"/>
</dbReference>
<dbReference type="RefSeq" id="WP_011219010.1">
    <property type="nucleotide sequence ID" value="NC_006370.1"/>
</dbReference>
<dbReference type="SMR" id="Q6LPQ4"/>
<dbReference type="STRING" id="298386.PBPRA2337"/>
<dbReference type="KEGG" id="ppr:PBPRA2337"/>
<dbReference type="eggNOG" id="COG2145">
    <property type="taxonomic scope" value="Bacteria"/>
</dbReference>
<dbReference type="HOGENOM" id="CLU_019943_0_1_6"/>
<dbReference type="UniPathway" id="UPA00060">
    <property type="reaction ID" value="UER00139"/>
</dbReference>
<dbReference type="Proteomes" id="UP000000593">
    <property type="component" value="Chromosome 1"/>
</dbReference>
<dbReference type="GO" id="GO:0005524">
    <property type="term" value="F:ATP binding"/>
    <property type="evidence" value="ECO:0007669"/>
    <property type="project" value="UniProtKB-UniRule"/>
</dbReference>
<dbReference type="GO" id="GO:0004417">
    <property type="term" value="F:hydroxyethylthiazole kinase activity"/>
    <property type="evidence" value="ECO:0007669"/>
    <property type="project" value="UniProtKB-UniRule"/>
</dbReference>
<dbReference type="GO" id="GO:0000287">
    <property type="term" value="F:magnesium ion binding"/>
    <property type="evidence" value="ECO:0007669"/>
    <property type="project" value="UniProtKB-UniRule"/>
</dbReference>
<dbReference type="GO" id="GO:0009228">
    <property type="term" value="P:thiamine biosynthetic process"/>
    <property type="evidence" value="ECO:0007669"/>
    <property type="project" value="UniProtKB-KW"/>
</dbReference>
<dbReference type="GO" id="GO:0009229">
    <property type="term" value="P:thiamine diphosphate biosynthetic process"/>
    <property type="evidence" value="ECO:0007669"/>
    <property type="project" value="UniProtKB-UniRule"/>
</dbReference>
<dbReference type="CDD" id="cd01170">
    <property type="entry name" value="THZ_kinase"/>
    <property type="match status" value="1"/>
</dbReference>
<dbReference type="Gene3D" id="3.40.1190.20">
    <property type="match status" value="1"/>
</dbReference>
<dbReference type="HAMAP" id="MF_00228">
    <property type="entry name" value="Thz_kinase"/>
    <property type="match status" value="1"/>
</dbReference>
<dbReference type="InterPro" id="IPR000417">
    <property type="entry name" value="Hyethyz_kinase"/>
</dbReference>
<dbReference type="InterPro" id="IPR029056">
    <property type="entry name" value="Ribokinase-like"/>
</dbReference>
<dbReference type="NCBIfam" id="NF006830">
    <property type="entry name" value="PRK09355.1"/>
    <property type="match status" value="1"/>
</dbReference>
<dbReference type="NCBIfam" id="TIGR00694">
    <property type="entry name" value="thiM"/>
    <property type="match status" value="1"/>
</dbReference>
<dbReference type="Pfam" id="PF02110">
    <property type="entry name" value="HK"/>
    <property type="match status" value="1"/>
</dbReference>
<dbReference type="PIRSF" id="PIRSF000513">
    <property type="entry name" value="Thz_kinase"/>
    <property type="match status" value="1"/>
</dbReference>
<dbReference type="PRINTS" id="PR01099">
    <property type="entry name" value="HYETHTZKNASE"/>
</dbReference>
<dbReference type="SUPFAM" id="SSF53613">
    <property type="entry name" value="Ribokinase-like"/>
    <property type="match status" value="1"/>
</dbReference>
<accession>Q6LPQ4</accession>
<reference key="1">
    <citation type="journal article" date="2005" name="Science">
        <title>Life at depth: Photobacterium profundum genome sequence and expression analysis.</title>
        <authorList>
            <person name="Vezzi A."/>
            <person name="Campanaro S."/>
            <person name="D'Angelo M."/>
            <person name="Simonato F."/>
            <person name="Vitulo N."/>
            <person name="Lauro F.M."/>
            <person name="Cestaro A."/>
            <person name="Malacrida G."/>
            <person name="Simionati B."/>
            <person name="Cannata N."/>
            <person name="Romualdi C."/>
            <person name="Bartlett D.H."/>
            <person name="Valle G."/>
        </authorList>
    </citation>
    <scope>NUCLEOTIDE SEQUENCE [LARGE SCALE GENOMIC DNA]</scope>
    <source>
        <strain>ATCC BAA-1253 / SS9</strain>
    </source>
</reference>
<organism>
    <name type="scientific">Photobacterium profundum (strain SS9)</name>
    <dbReference type="NCBI Taxonomy" id="298386"/>
    <lineage>
        <taxon>Bacteria</taxon>
        <taxon>Pseudomonadati</taxon>
        <taxon>Pseudomonadota</taxon>
        <taxon>Gammaproteobacteria</taxon>
        <taxon>Vibrionales</taxon>
        <taxon>Vibrionaceae</taxon>
        <taxon>Photobacterium</taxon>
    </lineage>
</organism>
<keyword id="KW-0067">ATP-binding</keyword>
<keyword id="KW-0418">Kinase</keyword>
<keyword id="KW-0460">Magnesium</keyword>
<keyword id="KW-0479">Metal-binding</keyword>
<keyword id="KW-0547">Nucleotide-binding</keyword>
<keyword id="KW-1185">Reference proteome</keyword>
<keyword id="KW-0784">Thiamine biosynthesis</keyword>
<keyword id="KW-0808">Transferase</keyword>